<gene>
    <name evidence="4" type="primary">mm22</name>
    <name type="ordered locus">MGMSRv2__1633</name>
    <name type="ORF">MGR_3691</name>
</gene>
<organism>
    <name type="scientific">Magnetospirillum gryphiswaldense (strain DSM 6361 / JCM 21280 / NBRC 15271 / MSR-1)</name>
    <dbReference type="NCBI Taxonomy" id="431944"/>
    <lineage>
        <taxon>Bacteria</taxon>
        <taxon>Pseudomonadati</taxon>
        <taxon>Pseudomonadota</taxon>
        <taxon>Alphaproteobacteria</taxon>
        <taxon>Rhodospirillales</taxon>
        <taxon>Rhodospirillaceae</taxon>
        <taxon>Magnetospirillum</taxon>
    </lineage>
</organism>
<evidence type="ECO:0000255" key="1"/>
<evidence type="ECO:0000256" key="2">
    <source>
        <dbReference type="SAM" id="MobiDB-lite"/>
    </source>
</evidence>
<evidence type="ECO:0000269" key="3">
    <source>
    </source>
</evidence>
<evidence type="ECO:0000303" key="4">
    <source>
    </source>
</evidence>
<evidence type="ECO:0000305" key="5"/>
<evidence type="ECO:0000305" key="6">
    <source>
    </source>
</evidence>
<keyword id="KW-0091">Biomineralization</keyword>
<keyword id="KW-0903">Direct protein sequencing</keyword>
<keyword id="KW-1281">Magnetosome</keyword>
<keyword id="KW-0472">Membrane</keyword>
<keyword id="KW-1185">Reference proteome</keyword>
<keyword id="KW-0812">Transmembrane</keyword>
<keyword id="KW-1133">Transmembrane helix</keyword>
<comment type="subcellular location">
    <subcellularLocation>
        <location evidence="3">Magnetosome membrane</location>
        <topology evidence="1">Multi-pass membrane protein</topology>
    </subcellularLocation>
</comment>
<comment type="miscellaneous">
    <text evidence="5">This bacteria makes up to 60 cubo-octahedral magnetosomes of about 45 nm in diameter which contain membrane-bound crystals of magnetite (Fe(3)O(4)).</text>
</comment>
<comment type="miscellaneous">
    <text evidence="6">Does not seem to have an ortholog in most other magnetotactic bacteria.</text>
</comment>
<dbReference type="EMBL" id="BX640511">
    <property type="protein sequence ID" value="CAE45335.1"/>
    <property type="molecule type" value="Genomic_DNA"/>
</dbReference>
<dbReference type="EMBL" id="CU459003">
    <property type="protein sequence ID" value="CAM75126.1"/>
    <property type="molecule type" value="Genomic_DNA"/>
</dbReference>
<dbReference type="EMBL" id="HG794546">
    <property type="protein sequence ID" value="CDK98848.1"/>
    <property type="molecule type" value="Genomic_DNA"/>
</dbReference>
<dbReference type="STRING" id="1430440.MGMSRv2__1633"/>
<dbReference type="KEGG" id="mgy:MGMSRv2__1633"/>
<dbReference type="eggNOG" id="COG3597">
    <property type="taxonomic scope" value="Bacteria"/>
</dbReference>
<dbReference type="HOGENOM" id="CLU_076562_1_0_5"/>
<dbReference type="Proteomes" id="UP000018922">
    <property type="component" value="Chromosome I"/>
</dbReference>
<dbReference type="GO" id="GO:0110146">
    <property type="term" value="C:magnetosome membrane"/>
    <property type="evidence" value="ECO:0000314"/>
    <property type="project" value="UniProtKB"/>
</dbReference>
<dbReference type="InterPro" id="IPR021147">
    <property type="entry name" value="DUF697"/>
</dbReference>
<dbReference type="Pfam" id="PF05128">
    <property type="entry name" value="DUF697"/>
    <property type="match status" value="1"/>
</dbReference>
<sequence>MAAQTAASEAPAPAAAPADSPTTAGPTPDSVGRDLVAENMIKDYVLAAVAASIVPVPLFDIAAVVAIELRMIQKLSELYGKPFSESLGRSVIASLAGGVVGYGAGMAVAVSLTKLIPGVGWMLGMVSLPVIAGATTYAIGRVFVKHYENGGDIFNLSADAMRAYYKQQFEKGKALAAKVKARKEAAAVDDVAAAH</sequence>
<proteinExistence type="evidence at protein level"/>
<protein>
    <recommendedName>
        <fullName evidence="4">Magnetosome membrane protein 22</fullName>
    </recommendedName>
</protein>
<reference key="1">
    <citation type="journal article" date="2004" name="Appl. Environ. Microbiol.">
        <title>Biochemical and proteomic analysis of the magnetosome membrane in Magnetospirillum gryphiswaldense.</title>
        <authorList>
            <person name="Gruenberg K."/>
            <person name="Mueller E.C."/>
            <person name="Otto A."/>
            <person name="Reszka R."/>
            <person name="Linder D."/>
            <person name="Kube M."/>
            <person name="Reinhardt R."/>
            <person name="Schueler D."/>
        </authorList>
    </citation>
    <scope>NUCLEOTIDE SEQUENCE [GENOMIC DNA]</scope>
    <scope>PROTEIN SEQUENCE OF 3-16</scope>
    <scope>SUBCELLULAR LOCATION</scope>
    <source>
        <strain>DSM 6361 / JCM 21280 / NBRC 15271 / MSR-1</strain>
    </source>
</reference>
<reference key="2">
    <citation type="journal article" date="2007" name="J. Bacteriol.">
        <title>Comparative genome analysis of four magnetotactic bacteria reveals a complex set of group-specific genes implicated in magnetosome biomineralization and function.</title>
        <authorList>
            <person name="Richter M."/>
            <person name="Kube M."/>
            <person name="Bazylinski D.A."/>
            <person name="Lombardot T."/>
            <person name="Gloeckner F.O."/>
            <person name="Reinhardt R."/>
            <person name="Schueler D."/>
        </authorList>
    </citation>
    <scope>NUCLEOTIDE SEQUENCE [LARGE SCALE GENOMIC DNA]</scope>
    <source>
        <strain>DSM 6361 / JCM 21280 / NBRC 15271 / MSR-1</strain>
    </source>
</reference>
<reference key="3">
    <citation type="journal article" date="2014" name="Genome Announc.">
        <title>Complete genome sequence of Magnetospirillum gryphiswaldense MSR-1.</title>
        <authorList>
            <person name="Wang X."/>
            <person name="Wang Q."/>
            <person name="Zhang W."/>
            <person name="Wang Y."/>
            <person name="Li L."/>
            <person name="Wen T."/>
            <person name="Zhang T."/>
            <person name="Zhang Y."/>
            <person name="Xu J."/>
            <person name="Hu J."/>
            <person name="Li S."/>
            <person name="Liu L."/>
            <person name="Liu J."/>
            <person name="Jiang W."/>
            <person name="Tian J."/>
            <person name="Li Y."/>
            <person name="Schuler D."/>
            <person name="Wang L."/>
            <person name="Li J."/>
        </authorList>
    </citation>
    <scope>NUCLEOTIDE SEQUENCE [LARGE SCALE GENOMIC DNA]</scope>
    <source>
        <strain>DSM 6361 / JCM 21280 / NBRC 15271 / MSR-1</strain>
    </source>
</reference>
<name>MM22_MAGGM</name>
<accession>V6F2Z8</accession>
<accession>Q6N0B5</accession>
<feature type="chain" id="PRO_0000447817" description="Magnetosome membrane protein 22">
    <location>
        <begin position="1"/>
        <end position="195"/>
    </location>
</feature>
<feature type="transmembrane region" description="Helical" evidence="1">
    <location>
        <begin position="45"/>
        <end position="65"/>
    </location>
</feature>
<feature type="transmembrane region" description="Helical" evidence="1">
    <location>
        <begin position="90"/>
        <end position="110"/>
    </location>
</feature>
<feature type="transmembrane region" description="Helical" evidence="1">
    <location>
        <begin position="115"/>
        <end position="135"/>
    </location>
</feature>
<feature type="region of interest" description="Disordered" evidence="2">
    <location>
        <begin position="1"/>
        <end position="31"/>
    </location>
</feature>
<feature type="compositionally biased region" description="Low complexity" evidence="2">
    <location>
        <begin position="1"/>
        <end position="28"/>
    </location>
</feature>
<feature type="sequence conflict" description="In Ref. 1; CAE45335 and 2; CAM75126." evidence="5" ref="1 2">
    <original>APAP</original>
    <variation>TPAA</variation>
    <location>
        <begin position="10"/>
        <end position="13"/>
    </location>
</feature>
<feature type="sequence conflict" description="In Ref. 1; CAE45335 and 2; CAM75126." evidence="5" ref="1 2">
    <original>TAG</original>
    <variation>AVA</variation>
    <location>
        <begin position="23"/>
        <end position="25"/>
    </location>
</feature>